<protein>
    <recommendedName>
        <fullName>Beta-mannosidase A</fullName>
        <ecNumber>3.2.1.25</ecNumber>
    </recommendedName>
    <alternativeName>
        <fullName>Mannanase A</fullName>
        <shortName>Mannase A</shortName>
    </alternativeName>
</protein>
<proteinExistence type="inferred from homology"/>
<sequence length="926" mass="103736">MHVKAETVLALLTPAPPSVVGQHVVDLSGDGWTLSSTALNRTVPGHLPSQVHLDLFEAGVIDIMASMILTFVGLRMPIGRIPATRLKAYFESTWLVFDGLDTFATITFCDQHVGSTDNQFRQHHFDVSQILKECKQDPVLRINFGSAPNIANTIAKSPDAEEWPPGVQITNEYPNRWYIRKEQSDFGWDWGPAFAPVGPWKPSYIVQNGHAELYVLNTDIDIYRQGQINYLPPDQSQPWIVNASIDFLGPVPCKPSMSIEIKDAATGSVLSSGLLQNVTVSGKSITGTTTIDGDAPKLWWPSGMGKQNLYNVTITVQNDMKKSLAKVTKRTGFRTIFLNQRNITDDQLAQGIAPGANWHFEINGYEFYTKGSNIIPPDAFWPRVTQARMARLFDAVTAGNQNMLRVWASGAYLHDFIYDLADEKGILLWSEFQFSDALYPVNDAFLENVAAEVVYNVRRVNHHPSLALWAGGNEIESLMLPMARRADPTGYSKYIGEYEKLYISLILPLVYENTRSITYSPSSTTEGYLYVNLSAPVPMAERYSNTTPGSYYGDTDYYNYDTSVSFDYNHYPVGRFANEFGFHSMPSLQTWQQAVDPEDLQFNSSVVVLRNHHYTAGGLFTDNFKNSSKGMGEMTMGVEAYYPIPSKSDSVANFSAWCHATQLFQADLYKSQIQFYRRGSGMPERQLGSLYWQLEDIWQAPTWAGIEYDGRWKVLHYVARDIYQPIIVSPFWNYTTGRLEVYVTSDLWEPAQGTVNLTWVDLSGKSIANNAGTPETVSFTVGALNTTNIYTTNISELSLPDLKDSILILSLSGEGRLPNASSKKAFVHQNHFTPVFPKDLSLKDPKLEVSYSPESRKFTVQATGGVSLYTWLDYPAGAVGYFEANAFVLLPGVPKEVSFVAQEGNVTDDWLQRVTVQSLWDQKVRD</sequence>
<organism>
    <name type="scientific">Aspergillus fumigatus (strain ATCC MYA-4609 / CBS 101355 / FGSC A1100 / Af293)</name>
    <name type="common">Neosartorya fumigata</name>
    <dbReference type="NCBI Taxonomy" id="330879"/>
    <lineage>
        <taxon>Eukaryota</taxon>
        <taxon>Fungi</taxon>
        <taxon>Dikarya</taxon>
        <taxon>Ascomycota</taxon>
        <taxon>Pezizomycotina</taxon>
        <taxon>Eurotiomycetes</taxon>
        <taxon>Eurotiomycetidae</taxon>
        <taxon>Eurotiales</taxon>
        <taxon>Aspergillaceae</taxon>
        <taxon>Aspergillus</taxon>
        <taxon>Aspergillus subgen. Fumigati</taxon>
    </lineage>
</organism>
<accession>Q4WMS9</accession>
<feature type="signal peptide" evidence="2">
    <location>
        <begin position="1"/>
        <end position="21"/>
    </location>
</feature>
<feature type="chain" id="PRO_0000394646" description="Beta-mannosidase A">
    <location>
        <begin position="22"/>
        <end position="926"/>
    </location>
</feature>
<feature type="active site" description="Proton donor" evidence="1">
    <location>
        <position position="474"/>
    </location>
</feature>
<feature type="glycosylation site" description="N-linked (GlcNAc...) asparagine" evidence="2">
    <location>
        <position position="40"/>
    </location>
</feature>
<feature type="glycosylation site" description="N-linked (GlcNAc...) asparagine" evidence="2">
    <location>
        <position position="242"/>
    </location>
</feature>
<feature type="glycosylation site" description="N-linked (GlcNAc...) asparagine" evidence="2">
    <location>
        <position position="277"/>
    </location>
</feature>
<feature type="glycosylation site" description="N-linked (GlcNAc...) asparagine" evidence="2">
    <location>
        <position position="311"/>
    </location>
</feature>
<feature type="glycosylation site" description="N-linked (GlcNAc...) asparagine" evidence="2">
    <location>
        <position position="342"/>
    </location>
</feature>
<feature type="glycosylation site" description="N-linked (GlcNAc...) asparagine" evidence="2">
    <location>
        <position position="532"/>
    </location>
</feature>
<feature type="glycosylation site" description="N-linked (GlcNAc...) asparagine" evidence="2">
    <location>
        <position position="603"/>
    </location>
</feature>
<feature type="glycosylation site" description="N-linked (GlcNAc...) asparagine" evidence="2">
    <location>
        <position position="626"/>
    </location>
</feature>
<feature type="glycosylation site" description="N-linked (GlcNAc...) asparagine" evidence="2">
    <location>
        <position position="653"/>
    </location>
</feature>
<feature type="glycosylation site" description="N-linked (GlcNAc...) asparagine" evidence="2">
    <location>
        <position position="733"/>
    </location>
</feature>
<feature type="glycosylation site" description="N-linked (GlcNAc...) asparagine" evidence="2">
    <location>
        <position position="756"/>
    </location>
</feature>
<feature type="glycosylation site" description="N-linked (GlcNAc...) asparagine" evidence="2">
    <location>
        <position position="785"/>
    </location>
</feature>
<feature type="glycosylation site" description="N-linked (GlcNAc...) asparagine" evidence="2">
    <location>
        <position position="793"/>
    </location>
</feature>
<feature type="glycosylation site" description="N-linked (GlcNAc...) asparagine" evidence="2">
    <location>
        <position position="819"/>
    </location>
</feature>
<feature type="glycosylation site" description="N-linked (GlcNAc...) asparagine" evidence="2">
    <location>
        <position position="905"/>
    </location>
</feature>
<comment type="function">
    <text evidence="1">Exoglycosidase that cleaves the single beta-linked mannose residue from the non-reducing end of beta-mannosidic oligosaccharides of various complexity and length. Involved in the degradation of polymeric mannan and galactomannan (By similarity).</text>
</comment>
<comment type="catalytic activity">
    <reaction>
        <text>Hydrolysis of terminal, non-reducing beta-D-mannose residues in beta-D-mannosides.</text>
        <dbReference type="EC" id="3.2.1.25"/>
    </reaction>
</comment>
<comment type="pathway">
    <text>Glycan metabolism; N-glycan degradation.</text>
</comment>
<comment type="subunit">
    <text evidence="1">Homodimer.</text>
</comment>
<comment type="subcellular location">
    <subcellularLocation>
        <location evidence="1">Secreted</location>
    </subcellularLocation>
</comment>
<comment type="similarity">
    <text evidence="3">Belongs to the glycosyl hydrolase 2 family. Beta-mannosidase A subfamily.</text>
</comment>
<gene>
    <name type="primary">mndA</name>
    <name type="ORF">AFUA_6G08840</name>
</gene>
<dbReference type="EC" id="3.2.1.25"/>
<dbReference type="EMBL" id="AAHF01000006">
    <property type="protein sequence ID" value="EAL88735.1"/>
    <property type="molecule type" value="Genomic_DNA"/>
</dbReference>
<dbReference type="RefSeq" id="XP_750773.1">
    <property type="nucleotide sequence ID" value="XM_745680.1"/>
</dbReference>
<dbReference type="SMR" id="Q4WMS9"/>
<dbReference type="STRING" id="330879.Q4WMS9"/>
<dbReference type="GlyCosmos" id="Q4WMS9">
    <property type="glycosylation" value="15 sites, No reported glycans"/>
</dbReference>
<dbReference type="EnsemblFungi" id="EAL88735">
    <property type="protein sequence ID" value="EAL88735"/>
    <property type="gene ID" value="AFUA_6G08840"/>
</dbReference>
<dbReference type="GeneID" id="3508060"/>
<dbReference type="KEGG" id="afm:AFUA_6G08840"/>
<dbReference type="eggNOG" id="KOG2230">
    <property type="taxonomic scope" value="Eukaryota"/>
</dbReference>
<dbReference type="HOGENOM" id="CLU_005015_3_0_1"/>
<dbReference type="InParanoid" id="Q4WMS9"/>
<dbReference type="OMA" id="PWKPAYI"/>
<dbReference type="OrthoDB" id="2866996at2759"/>
<dbReference type="UniPathway" id="UPA00280"/>
<dbReference type="Proteomes" id="UP000002530">
    <property type="component" value="Chromosome 6"/>
</dbReference>
<dbReference type="GO" id="GO:0005576">
    <property type="term" value="C:extracellular region"/>
    <property type="evidence" value="ECO:0007669"/>
    <property type="project" value="UniProtKB-SubCell"/>
</dbReference>
<dbReference type="GO" id="GO:0004567">
    <property type="term" value="F:beta-mannosidase activity"/>
    <property type="evidence" value="ECO:0000318"/>
    <property type="project" value="GO_Central"/>
</dbReference>
<dbReference type="GO" id="GO:0006516">
    <property type="term" value="P:glycoprotein catabolic process"/>
    <property type="evidence" value="ECO:0000318"/>
    <property type="project" value="GO_Central"/>
</dbReference>
<dbReference type="GO" id="GO:0000272">
    <property type="term" value="P:polysaccharide catabolic process"/>
    <property type="evidence" value="ECO:0007669"/>
    <property type="project" value="UniProtKB-KW"/>
</dbReference>
<dbReference type="FunFam" id="2.60.120.260:FF:000314">
    <property type="entry name" value="Beta-mannosidase A"/>
    <property type="match status" value="1"/>
</dbReference>
<dbReference type="FunFam" id="2.60.40.10:FF:001511">
    <property type="entry name" value="Beta-mannosidase A"/>
    <property type="match status" value="1"/>
</dbReference>
<dbReference type="FunFam" id="2.60.40.10:FF:002310">
    <property type="entry name" value="Beta-mannosidase A"/>
    <property type="match status" value="1"/>
</dbReference>
<dbReference type="FunFam" id="3.20.20.80:FF:000084">
    <property type="entry name" value="Beta-mannosidase A"/>
    <property type="match status" value="1"/>
</dbReference>
<dbReference type="Gene3D" id="2.60.120.260">
    <property type="entry name" value="Galactose-binding domain-like"/>
    <property type="match status" value="1"/>
</dbReference>
<dbReference type="Gene3D" id="3.20.20.80">
    <property type="entry name" value="Glycosidases"/>
    <property type="match status" value="1"/>
</dbReference>
<dbReference type="Gene3D" id="2.60.40.10">
    <property type="entry name" value="Immunoglobulins"/>
    <property type="match status" value="3"/>
</dbReference>
<dbReference type="InterPro" id="IPR036156">
    <property type="entry name" value="Beta-gal/glucu_dom_sf"/>
</dbReference>
<dbReference type="InterPro" id="IPR054593">
    <property type="entry name" value="Beta-mannosidase-like_N2"/>
</dbReference>
<dbReference type="InterPro" id="IPR050887">
    <property type="entry name" value="Beta-mannosidase_GH2"/>
</dbReference>
<dbReference type="InterPro" id="IPR041625">
    <property type="entry name" value="Beta-mannosidase_Ig"/>
</dbReference>
<dbReference type="InterPro" id="IPR008979">
    <property type="entry name" value="Galactose-bd-like_sf"/>
</dbReference>
<dbReference type="InterPro" id="IPR006102">
    <property type="entry name" value="Glyco_hydro_2_Ig-like"/>
</dbReference>
<dbReference type="InterPro" id="IPR017853">
    <property type="entry name" value="Glycoside_hydrolase_SF"/>
</dbReference>
<dbReference type="InterPro" id="IPR013783">
    <property type="entry name" value="Ig-like_fold"/>
</dbReference>
<dbReference type="InterPro" id="IPR041447">
    <property type="entry name" value="Mannosidase_ig"/>
</dbReference>
<dbReference type="PANTHER" id="PTHR43730">
    <property type="entry name" value="BETA-MANNOSIDASE"/>
    <property type="match status" value="1"/>
</dbReference>
<dbReference type="PANTHER" id="PTHR43730:SF5">
    <property type="entry name" value="BETA-MANNOSIDASE A"/>
    <property type="match status" value="1"/>
</dbReference>
<dbReference type="Pfam" id="PF00703">
    <property type="entry name" value="Glyco_hydro_2"/>
    <property type="match status" value="1"/>
</dbReference>
<dbReference type="Pfam" id="PF22666">
    <property type="entry name" value="Glyco_hydro_2_N2"/>
    <property type="match status" value="1"/>
</dbReference>
<dbReference type="Pfam" id="PF17753">
    <property type="entry name" value="Ig_mannosidase"/>
    <property type="match status" value="1"/>
</dbReference>
<dbReference type="Pfam" id="PF17786">
    <property type="entry name" value="Mannosidase_ig"/>
    <property type="match status" value="1"/>
</dbReference>
<dbReference type="SUPFAM" id="SSF51445">
    <property type="entry name" value="(Trans)glycosidases"/>
    <property type="match status" value="1"/>
</dbReference>
<dbReference type="SUPFAM" id="SSF49303">
    <property type="entry name" value="beta-Galactosidase/glucuronidase domain"/>
    <property type="match status" value="2"/>
</dbReference>
<dbReference type="SUPFAM" id="SSF49785">
    <property type="entry name" value="Galactose-binding domain-like"/>
    <property type="match status" value="1"/>
</dbReference>
<name>MANBA_ASPFU</name>
<evidence type="ECO:0000250" key="1"/>
<evidence type="ECO:0000255" key="2"/>
<evidence type="ECO:0000305" key="3"/>
<reference key="1">
    <citation type="journal article" date="2005" name="Nature">
        <title>Genomic sequence of the pathogenic and allergenic filamentous fungus Aspergillus fumigatus.</title>
        <authorList>
            <person name="Nierman W.C."/>
            <person name="Pain A."/>
            <person name="Anderson M.J."/>
            <person name="Wortman J.R."/>
            <person name="Kim H.S."/>
            <person name="Arroyo J."/>
            <person name="Berriman M."/>
            <person name="Abe K."/>
            <person name="Archer D.B."/>
            <person name="Bermejo C."/>
            <person name="Bennett J.W."/>
            <person name="Bowyer P."/>
            <person name="Chen D."/>
            <person name="Collins M."/>
            <person name="Coulsen R."/>
            <person name="Davies R."/>
            <person name="Dyer P.S."/>
            <person name="Farman M.L."/>
            <person name="Fedorova N."/>
            <person name="Fedorova N.D."/>
            <person name="Feldblyum T.V."/>
            <person name="Fischer R."/>
            <person name="Fosker N."/>
            <person name="Fraser A."/>
            <person name="Garcia J.L."/>
            <person name="Garcia M.J."/>
            <person name="Goble A."/>
            <person name="Goldman G.H."/>
            <person name="Gomi K."/>
            <person name="Griffith-Jones S."/>
            <person name="Gwilliam R."/>
            <person name="Haas B.J."/>
            <person name="Haas H."/>
            <person name="Harris D.E."/>
            <person name="Horiuchi H."/>
            <person name="Huang J."/>
            <person name="Humphray S."/>
            <person name="Jimenez J."/>
            <person name="Keller N."/>
            <person name="Khouri H."/>
            <person name="Kitamoto K."/>
            <person name="Kobayashi T."/>
            <person name="Konzack S."/>
            <person name="Kulkarni R."/>
            <person name="Kumagai T."/>
            <person name="Lafton A."/>
            <person name="Latge J.-P."/>
            <person name="Li W."/>
            <person name="Lord A."/>
            <person name="Lu C."/>
            <person name="Majoros W.H."/>
            <person name="May G.S."/>
            <person name="Miller B.L."/>
            <person name="Mohamoud Y."/>
            <person name="Molina M."/>
            <person name="Monod M."/>
            <person name="Mouyna I."/>
            <person name="Mulligan S."/>
            <person name="Murphy L.D."/>
            <person name="O'Neil S."/>
            <person name="Paulsen I."/>
            <person name="Penalva M.A."/>
            <person name="Pertea M."/>
            <person name="Price C."/>
            <person name="Pritchard B.L."/>
            <person name="Quail M.A."/>
            <person name="Rabbinowitsch E."/>
            <person name="Rawlins N."/>
            <person name="Rajandream M.A."/>
            <person name="Reichard U."/>
            <person name="Renauld H."/>
            <person name="Robson G.D."/>
            <person name="Rodriguez de Cordoba S."/>
            <person name="Rodriguez-Pena J.M."/>
            <person name="Ronning C.M."/>
            <person name="Rutter S."/>
            <person name="Salzberg S.L."/>
            <person name="Sanchez M."/>
            <person name="Sanchez-Ferrero J.C."/>
            <person name="Saunders D."/>
            <person name="Seeger K."/>
            <person name="Squares R."/>
            <person name="Squares S."/>
            <person name="Takeuchi M."/>
            <person name="Tekaia F."/>
            <person name="Turner G."/>
            <person name="Vazquez de Aldana C.R."/>
            <person name="Weidman J."/>
            <person name="White O."/>
            <person name="Woodward J.R."/>
            <person name="Yu J.-H."/>
            <person name="Fraser C.M."/>
            <person name="Galagan J.E."/>
            <person name="Asai K."/>
            <person name="Machida M."/>
            <person name="Hall N."/>
            <person name="Barrell B.G."/>
            <person name="Denning D.W."/>
        </authorList>
    </citation>
    <scope>NUCLEOTIDE SEQUENCE [LARGE SCALE GENOMIC DNA]</scope>
    <source>
        <strain>ATCC MYA-4609 / CBS 101355 / FGSC A1100 / Af293</strain>
    </source>
</reference>
<keyword id="KW-0119">Carbohydrate metabolism</keyword>
<keyword id="KW-0325">Glycoprotein</keyword>
<keyword id="KW-0326">Glycosidase</keyword>
<keyword id="KW-0378">Hydrolase</keyword>
<keyword id="KW-0624">Polysaccharide degradation</keyword>
<keyword id="KW-1185">Reference proteome</keyword>
<keyword id="KW-0964">Secreted</keyword>
<keyword id="KW-0732">Signal</keyword>